<feature type="chain" id="PRO_0000178719" description="Fructose-bisphosphate aldolase">
    <location>
        <begin position="1"/>
        <end position="288"/>
    </location>
</feature>
<feature type="active site" description="Proton donor" evidence="1">
    <location>
        <position position="84"/>
    </location>
</feature>
<feature type="binding site" evidence="1">
    <location>
        <position position="49"/>
    </location>
    <ligand>
        <name>D-glyceraldehyde 3-phosphate</name>
        <dbReference type="ChEBI" id="CHEBI:59776"/>
    </ligand>
</feature>
<feature type="binding site" evidence="1">
    <location>
        <position position="85"/>
    </location>
    <ligand>
        <name>Zn(2+)</name>
        <dbReference type="ChEBI" id="CHEBI:29105"/>
        <label>1</label>
        <note>catalytic</note>
    </ligand>
</feature>
<feature type="binding site" evidence="1">
    <location>
        <position position="105"/>
    </location>
    <ligand>
        <name>Zn(2+)</name>
        <dbReference type="ChEBI" id="CHEBI:29105"/>
        <label>2</label>
    </ligand>
</feature>
<feature type="binding site" evidence="1">
    <location>
        <position position="135"/>
    </location>
    <ligand>
        <name>Zn(2+)</name>
        <dbReference type="ChEBI" id="CHEBI:29105"/>
        <label>2</label>
    </ligand>
</feature>
<feature type="binding site" evidence="1">
    <location>
        <position position="177"/>
    </location>
    <ligand>
        <name>Zn(2+)</name>
        <dbReference type="ChEBI" id="CHEBI:29105"/>
        <label>1</label>
        <note>catalytic</note>
    </ligand>
</feature>
<feature type="binding site" evidence="1">
    <location>
        <position position="178"/>
    </location>
    <ligand>
        <name>dihydroxyacetone phosphate</name>
        <dbReference type="ChEBI" id="CHEBI:57642"/>
    </ligand>
</feature>
<feature type="binding site" evidence="1">
    <location>
        <position position="206"/>
    </location>
    <ligand>
        <name>Zn(2+)</name>
        <dbReference type="ChEBI" id="CHEBI:29105"/>
        <label>1</label>
        <note>catalytic</note>
    </ligand>
</feature>
<feature type="binding site" evidence="1">
    <location>
        <begin position="207"/>
        <end position="209"/>
    </location>
    <ligand>
        <name>dihydroxyacetone phosphate</name>
        <dbReference type="ChEBI" id="CHEBI:57642"/>
    </ligand>
</feature>
<feature type="binding site" evidence="1">
    <location>
        <begin position="228"/>
        <end position="231"/>
    </location>
    <ligand>
        <name>dihydroxyacetone phosphate</name>
        <dbReference type="ChEBI" id="CHEBI:57642"/>
    </ligand>
</feature>
<comment type="function">
    <text evidence="1">Catalyzes the aldol condensation of dihydroxyacetone phosphate (DHAP or glycerone-phosphate) with glyceraldehyde 3-phosphate (G3P) to form fructose 1,6-bisphosphate (FBP) in gluconeogenesis and the reverse reaction in glycolysis.</text>
</comment>
<comment type="catalytic activity">
    <reaction>
        <text>beta-D-fructose 1,6-bisphosphate = D-glyceraldehyde 3-phosphate + dihydroxyacetone phosphate</text>
        <dbReference type="Rhea" id="RHEA:14729"/>
        <dbReference type="ChEBI" id="CHEBI:32966"/>
        <dbReference type="ChEBI" id="CHEBI:57642"/>
        <dbReference type="ChEBI" id="CHEBI:59776"/>
        <dbReference type="EC" id="4.1.2.13"/>
    </reaction>
</comment>
<comment type="cofactor">
    <cofactor evidence="1">
        <name>Zn(2+)</name>
        <dbReference type="ChEBI" id="CHEBI:29105"/>
    </cofactor>
    <text evidence="1">Binds 2 Zn(2+) ions per subunit. One is catalytic and the other provides a structural contribution.</text>
</comment>
<comment type="pathway">
    <text>Carbohydrate degradation; glycolysis; D-glyceraldehyde 3-phosphate and glycerone phosphate from D-glucose: step 4/4.</text>
</comment>
<comment type="subunit">
    <text evidence="1">Homodimer.</text>
</comment>
<comment type="similarity">
    <text evidence="2">Belongs to the class II fructose-bisphosphate aldolase family.</text>
</comment>
<sequence>MLVNFKLMLQKAKLGKYAIPHININNYEWAKAVLTAANQANSPIIVSVSEGALKYMSGYSVVIPLVKGLIESLSVKVPVTLHLDHGSYDACIQALQAGFSSVMFDGSHLPFEENFNKSKKLIEIAQKTNASVELEVGTIGGEEDGVIGQGELANVDECKQIASLKPDALAAGIGNIHGIYPKNWKGLNFPLIETISKITNLPLVLHGGSGILENDVKKAISLGICKLNINTECQLAFAHEIRKYIESNKDLDLNKKGYDPRKLLKEPTQAIVDTCLEKIDLCGSRNKA</sequence>
<dbReference type="EC" id="4.1.2.13"/>
<dbReference type="EMBL" id="L43967">
    <property type="protein sequence ID" value="AAC71239.1"/>
    <property type="molecule type" value="Genomic_DNA"/>
</dbReference>
<dbReference type="PIR" id="E64202">
    <property type="entry name" value="E64202"/>
</dbReference>
<dbReference type="RefSeq" id="WP_009885917.1">
    <property type="nucleotide sequence ID" value="NC_000908.2"/>
</dbReference>
<dbReference type="SMR" id="P47269"/>
<dbReference type="FunCoup" id="P47269">
    <property type="interactions" value="171"/>
</dbReference>
<dbReference type="STRING" id="243273.MG_023"/>
<dbReference type="GeneID" id="88282138"/>
<dbReference type="KEGG" id="mge:MG_023"/>
<dbReference type="eggNOG" id="COG0191">
    <property type="taxonomic scope" value="Bacteria"/>
</dbReference>
<dbReference type="HOGENOM" id="CLU_040088_0_1_14"/>
<dbReference type="InParanoid" id="P47269"/>
<dbReference type="OrthoDB" id="9803995at2"/>
<dbReference type="BioCyc" id="MGEN243273:G1GJ2-23-MONOMER"/>
<dbReference type="UniPathway" id="UPA00109">
    <property type="reaction ID" value="UER00183"/>
</dbReference>
<dbReference type="Proteomes" id="UP000000807">
    <property type="component" value="Chromosome"/>
</dbReference>
<dbReference type="GO" id="GO:0005829">
    <property type="term" value="C:cytosol"/>
    <property type="evidence" value="ECO:0000318"/>
    <property type="project" value="GO_Central"/>
</dbReference>
<dbReference type="GO" id="GO:0004332">
    <property type="term" value="F:fructose-bisphosphate aldolase activity"/>
    <property type="evidence" value="ECO:0007669"/>
    <property type="project" value="UniProtKB-EC"/>
</dbReference>
<dbReference type="GO" id="GO:0008270">
    <property type="term" value="F:zinc ion binding"/>
    <property type="evidence" value="ECO:0007669"/>
    <property type="project" value="InterPro"/>
</dbReference>
<dbReference type="GO" id="GO:0030388">
    <property type="term" value="P:fructose 1,6-bisphosphate metabolic process"/>
    <property type="evidence" value="ECO:0007669"/>
    <property type="project" value="InterPro"/>
</dbReference>
<dbReference type="GO" id="GO:0006096">
    <property type="term" value="P:glycolytic process"/>
    <property type="evidence" value="ECO:0007669"/>
    <property type="project" value="UniProtKB-UniPathway"/>
</dbReference>
<dbReference type="CDD" id="cd00947">
    <property type="entry name" value="TBP_aldolase_IIB"/>
    <property type="match status" value="1"/>
</dbReference>
<dbReference type="Gene3D" id="3.20.20.70">
    <property type="entry name" value="Aldolase class I"/>
    <property type="match status" value="1"/>
</dbReference>
<dbReference type="InterPro" id="IPR013785">
    <property type="entry name" value="Aldolase_TIM"/>
</dbReference>
<dbReference type="InterPro" id="IPR000771">
    <property type="entry name" value="FBA_II"/>
</dbReference>
<dbReference type="InterPro" id="IPR011289">
    <property type="entry name" value="Fruc_bis_ald_class-2"/>
</dbReference>
<dbReference type="InterPro" id="IPR006411">
    <property type="entry name" value="Fruct_bisP_bact"/>
</dbReference>
<dbReference type="NCBIfam" id="TIGR00167">
    <property type="entry name" value="cbbA"/>
    <property type="match status" value="1"/>
</dbReference>
<dbReference type="NCBIfam" id="TIGR01859">
    <property type="entry name" value="fruc_bis_ald"/>
    <property type="match status" value="1"/>
</dbReference>
<dbReference type="PANTHER" id="PTHR30559:SF0">
    <property type="entry name" value="FRUCTOSE-BISPHOSPHATE ALDOLASE"/>
    <property type="match status" value="1"/>
</dbReference>
<dbReference type="PANTHER" id="PTHR30559">
    <property type="entry name" value="FRUCTOSE-BISPHOSPHATE ALDOLASE CLASS 2"/>
    <property type="match status" value="1"/>
</dbReference>
<dbReference type="Pfam" id="PF01116">
    <property type="entry name" value="F_bP_aldolase"/>
    <property type="match status" value="1"/>
</dbReference>
<dbReference type="PIRSF" id="PIRSF001359">
    <property type="entry name" value="F_bP_aldolase_II"/>
    <property type="match status" value="1"/>
</dbReference>
<dbReference type="SUPFAM" id="SSF51569">
    <property type="entry name" value="Aldolase"/>
    <property type="match status" value="1"/>
</dbReference>
<dbReference type="PROSITE" id="PS00602">
    <property type="entry name" value="ALDOLASE_CLASS_II_1"/>
    <property type="match status" value="1"/>
</dbReference>
<dbReference type="PROSITE" id="PS00806">
    <property type="entry name" value="ALDOLASE_CLASS_II_2"/>
    <property type="match status" value="1"/>
</dbReference>
<protein>
    <recommendedName>
        <fullName>Fructose-bisphosphate aldolase</fullName>
        <shortName>FBP aldolase</shortName>
        <shortName>FBPA</shortName>
        <ecNumber>4.1.2.13</ecNumber>
    </recommendedName>
    <alternativeName>
        <fullName>Fructose-1,6-bisphosphate aldolase</fullName>
    </alternativeName>
</protein>
<accession>P47269</accession>
<evidence type="ECO:0000250" key="1"/>
<evidence type="ECO:0000305" key="2"/>
<organism>
    <name type="scientific">Mycoplasma genitalium (strain ATCC 33530 / DSM 19775 / NCTC 10195 / G37)</name>
    <name type="common">Mycoplasmoides genitalium</name>
    <dbReference type="NCBI Taxonomy" id="243273"/>
    <lineage>
        <taxon>Bacteria</taxon>
        <taxon>Bacillati</taxon>
        <taxon>Mycoplasmatota</taxon>
        <taxon>Mycoplasmoidales</taxon>
        <taxon>Mycoplasmoidaceae</taxon>
        <taxon>Mycoplasmoides</taxon>
    </lineage>
</organism>
<name>ALF_MYCGE</name>
<reference key="1">
    <citation type="journal article" date="1995" name="Science">
        <title>The minimal gene complement of Mycoplasma genitalium.</title>
        <authorList>
            <person name="Fraser C.M."/>
            <person name="Gocayne J.D."/>
            <person name="White O."/>
            <person name="Adams M.D."/>
            <person name="Clayton R.A."/>
            <person name="Fleischmann R.D."/>
            <person name="Bult C.J."/>
            <person name="Kerlavage A.R."/>
            <person name="Sutton G.G."/>
            <person name="Kelley J.M."/>
            <person name="Fritchman J.L."/>
            <person name="Weidman J.F."/>
            <person name="Small K.V."/>
            <person name="Sandusky M."/>
            <person name="Fuhrmann J.L."/>
            <person name="Nguyen D.T."/>
            <person name="Utterback T.R."/>
            <person name="Saudek D.M."/>
            <person name="Phillips C.A."/>
            <person name="Merrick J.M."/>
            <person name="Tomb J.-F."/>
            <person name="Dougherty B.A."/>
            <person name="Bott K.F."/>
            <person name="Hu P.-C."/>
            <person name="Lucier T.S."/>
            <person name="Peterson S.N."/>
            <person name="Smith H.O."/>
            <person name="Hutchison C.A. III"/>
            <person name="Venter J.C."/>
        </authorList>
    </citation>
    <scope>NUCLEOTIDE SEQUENCE [LARGE SCALE GENOMIC DNA]</scope>
    <source>
        <strain>ATCC 33530 / DSM 19775 / NCTC 10195 / G37</strain>
    </source>
</reference>
<gene>
    <name type="primary">fba</name>
    <name type="synonym">tsr</name>
    <name type="ordered locus">MG023</name>
</gene>
<proteinExistence type="inferred from homology"/>
<keyword id="KW-0324">Glycolysis</keyword>
<keyword id="KW-0456">Lyase</keyword>
<keyword id="KW-0479">Metal-binding</keyword>
<keyword id="KW-1185">Reference proteome</keyword>
<keyword id="KW-0862">Zinc</keyword>